<keyword id="KW-0963">Cytoplasm</keyword>
<keyword id="KW-0489">Methyltransferase</keyword>
<keyword id="KW-1185">Reference proteome</keyword>
<keyword id="KW-0698">rRNA processing</keyword>
<keyword id="KW-0949">S-adenosyl-L-methionine</keyword>
<keyword id="KW-0808">Transferase</keyword>
<evidence type="ECO:0000255" key="1">
    <source>
        <dbReference type="HAMAP-Rule" id="MF_01887"/>
    </source>
</evidence>
<sequence length="245" mass="26557">MSENIYGIHAVSAFLNNAPERLIEVYALKGRDDKRLQPLLNELHRLGITIQFVNRQTLDKKAEGEVHQGIMARVQPAKELNEADLDTLLQNQSNPLLLVLDGVTDPHNLGACLRTADAAGVCAVIVPKDKSAQLTAIARKVACGAAEVVPLIRVTNLARTLRELQQKHNIWVVGTAGEATNTLYQTQLTGGLALVMGAEGEGMRRLTREHCDQLISIPMAGSVSSLNVSVATGVCLFEIVRQRLA</sequence>
<protein>
    <recommendedName>
        <fullName evidence="1">23S rRNA (guanosine-2'-O-)-methyltransferase RlmB</fullName>
        <ecNumber evidence="1">2.1.1.185</ecNumber>
    </recommendedName>
    <alternativeName>
        <fullName evidence="1">23S rRNA (guanosine2251 2'-O)-methyltransferase</fullName>
    </alternativeName>
    <alternativeName>
        <fullName evidence="1">23S rRNA Gm2251 2'-O-methyltransferase</fullName>
    </alternativeName>
</protein>
<name>RLMB_PASMU</name>
<proteinExistence type="inferred from homology"/>
<gene>
    <name evidence="1" type="primary">rlmB</name>
    <name type="ordered locus">PM1953</name>
</gene>
<accession>Q9CJP3</accession>
<organism>
    <name type="scientific">Pasteurella multocida (strain Pm70)</name>
    <dbReference type="NCBI Taxonomy" id="272843"/>
    <lineage>
        <taxon>Bacteria</taxon>
        <taxon>Pseudomonadati</taxon>
        <taxon>Pseudomonadota</taxon>
        <taxon>Gammaproteobacteria</taxon>
        <taxon>Pasteurellales</taxon>
        <taxon>Pasteurellaceae</taxon>
        <taxon>Pasteurella</taxon>
    </lineage>
</organism>
<dbReference type="EC" id="2.1.1.185" evidence="1"/>
<dbReference type="EMBL" id="AE004439">
    <property type="protein sequence ID" value="AAK04037.1"/>
    <property type="molecule type" value="Genomic_DNA"/>
</dbReference>
<dbReference type="RefSeq" id="WP_005725044.1">
    <property type="nucleotide sequence ID" value="NC_002663.1"/>
</dbReference>
<dbReference type="SMR" id="Q9CJP3"/>
<dbReference type="STRING" id="272843.PM1953"/>
<dbReference type="EnsemblBacteria" id="AAK04037">
    <property type="protein sequence ID" value="AAK04037"/>
    <property type="gene ID" value="PM1953"/>
</dbReference>
<dbReference type="GeneID" id="77207282"/>
<dbReference type="KEGG" id="pmu:PM1953"/>
<dbReference type="HOGENOM" id="CLU_021322_0_1_6"/>
<dbReference type="OrthoDB" id="9785673at2"/>
<dbReference type="Proteomes" id="UP000000809">
    <property type="component" value="Chromosome"/>
</dbReference>
<dbReference type="GO" id="GO:0005829">
    <property type="term" value="C:cytosol"/>
    <property type="evidence" value="ECO:0007669"/>
    <property type="project" value="TreeGrafter"/>
</dbReference>
<dbReference type="GO" id="GO:0003723">
    <property type="term" value="F:RNA binding"/>
    <property type="evidence" value="ECO:0007669"/>
    <property type="project" value="InterPro"/>
</dbReference>
<dbReference type="GO" id="GO:0070039">
    <property type="term" value="F:rRNA (guanosine-2'-O-)-methyltransferase activity"/>
    <property type="evidence" value="ECO:0007669"/>
    <property type="project" value="UniProtKB-UniRule"/>
</dbReference>
<dbReference type="CDD" id="cd18103">
    <property type="entry name" value="SpoU-like_RlmB"/>
    <property type="match status" value="1"/>
</dbReference>
<dbReference type="FunFam" id="3.40.1280.10:FF:000005">
    <property type="entry name" value="23S rRNA (guanosine-2'-O-)-methyltransferase RlmB"/>
    <property type="match status" value="1"/>
</dbReference>
<dbReference type="FunFam" id="3.30.1330.30:FF:000007">
    <property type="entry name" value="23S rRNA methyltransferase"/>
    <property type="match status" value="1"/>
</dbReference>
<dbReference type="Gene3D" id="3.30.1330.30">
    <property type="match status" value="1"/>
</dbReference>
<dbReference type="Gene3D" id="3.40.1280.10">
    <property type="match status" value="1"/>
</dbReference>
<dbReference type="HAMAP" id="MF_01887">
    <property type="entry name" value="23SrRNA_methyltr_B"/>
    <property type="match status" value="1"/>
</dbReference>
<dbReference type="InterPro" id="IPR024915">
    <property type="entry name" value="23S_rRNA_MeTrfase_RlmB"/>
</dbReference>
<dbReference type="InterPro" id="IPR029028">
    <property type="entry name" value="Alpha/beta_knot_MTases"/>
</dbReference>
<dbReference type="InterPro" id="IPR029064">
    <property type="entry name" value="Ribosomal_eL30-like_sf"/>
</dbReference>
<dbReference type="InterPro" id="IPR004441">
    <property type="entry name" value="rRNA_MeTrfase_TrmH"/>
</dbReference>
<dbReference type="InterPro" id="IPR001537">
    <property type="entry name" value="SpoU_MeTrfase"/>
</dbReference>
<dbReference type="InterPro" id="IPR013123">
    <property type="entry name" value="SpoU_subst-bd"/>
</dbReference>
<dbReference type="InterPro" id="IPR029026">
    <property type="entry name" value="tRNA_m1G_MTases_N"/>
</dbReference>
<dbReference type="NCBIfam" id="NF008386">
    <property type="entry name" value="PRK11181.1"/>
    <property type="match status" value="1"/>
</dbReference>
<dbReference type="NCBIfam" id="TIGR00186">
    <property type="entry name" value="rRNA_methyl_3"/>
    <property type="match status" value="1"/>
</dbReference>
<dbReference type="PANTHER" id="PTHR46429">
    <property type="entry name" value="23S RRNA (GUANOSINE-2'-O-)-METHYLTRANSFERASE RLMB"/>
    <property type="match status" value="1"/>
</dbReference>
<dbReference type="PANTHER" id="PTHR46429:SF1">
    <property type="entry name" value="23S RRNA (GUANOSINE-2'-O-)-METHYLTRANSFERASE RLMB"/>
    <property type="match status" value="1"/>
</dbReference>
<dbReference type="Pfam" id="PF00588">
    <property type="entry name" value="SpoU_methylase"/>
    <property type="match status" value="1"/>
</dbReference>
<dbReference type="Pfam" id="PF08032">
    <property type="entry name" value="SpoU_sub_bind"/>
    <property type="match status" value="1"/>
</dbReference>
<dbReference type="SMART" id="SM00967">
    <property type="entry name" value="SpoU_sub_bind"/>
    <property type="match status" value="1"/>
</dbReference>
<dbReference type="SUPFAM" id="SSF75217">
    <property type="entry name" value="alpha/beta knot"/>
    <property type="match status" value="1"/>
</dbReference>
<dbReference type="SUPFAM" id="SSF55315">
    <property type="entry name" value="L30e-like"/>
    <property type="match status" value="1"/>
</dbReference>
<comment type="function">
    <text evidence="1">Specifically methylates the ribose of guanosine 2251 in 23S rRNA.</text>
</comment>
<comment type="catalytic activity">
    <reaction evidence="1">
        <text>guanosine(2251) in 23S rRNA + S-adenosyl-L-methionine = 2'-O-methylguanosine(2251) in 23S rRNA + S-adenosyl-L-homocysteine + H(+)</text>
        <dbReference type="Rhea" id="RHEA:24140"/>
        <dbReference type="Rhea" id="RHEA-COMP:10239"/>
        <dbReference type="Rhea" id="RHEA-COMP:10241"/>
        <dbReference type="ChEBI" id="CHEBI:15378"/>
        <dbReference type="ChEBI" id="CHEBI:57856"/>
        <dbReference type="ChEBI" id="CHEBI:59789"/>
        <dbReference type="ChEBI" id="CHEBI:74269"/>
        <dbReference type="ChEBI" id="CHEBI:74445"/>
        <dbReference type="EC" id="2.1.1.185"/>
    </reaction>
</comment>
<comment type="subcellular location">
    <subcellularLocation>
        <location evidence="1">Cytoplasm</location>
    </subcellularLocation>
</comment>
<comment type="similarity">
    <text evidence="1">Belongs to the class IV-like SAM-binding methyltransferase superfamily. RNA methyltransferase TrmH family. RlmB subfamily.</text>
</comment>
<reference key="1">
    <citation type="journal article" date="2001" name="Proc. Natl. Acad. Sci. U.S.A.">
        <title>Complete genomic sequence of Pasteurella multocida Pm70.</title>
        <authorList>
            <person name="May B.J."/>
            <person name="Zhang Q."/>
            <person name="Li L.L."/>
            <person name="Paustian M.L."/>
            <person name="Whittam T.S."/>
            <person name="Kapur V."/>
        </authorList>
    </citation>
    <scope>NUCLEOTIDE SEQUENCE [LARGE SCALE GENOMIC DNA]</scope>
    <source>
        <strain>Pm70</strain>
    </source>
</reference>
<feature type="chain" id="PRO_0000159794" description="23S rRNA (guanosine-2'-O-)-methyltransferase RlmB">
    <location>
        <begin position="1"/>
        <end position="245"/>
    </location>
</feature>
<feature type="binding site" evidence="1">
    <location>
        <position position="197"/>
    </location>
    <ligand>
        <name>S-adenosyl-L-methionine</name>
        <dbReference type="ChEBI" id="CHEBI:59789"/>
    </ligand>
</feature>
<feature type="binding site" evidence="1">
    <location>
        <position position="217"/>
    </location>
    <ligand>
        <name>S-adenosyl-L-methionine</name>
        <dbReference type="ChEBI" id="CHEBI:59789"/>
    </ligand>
</feature>
<feature type="binding site" evidence="1">
    <location>
        <position position="226"/>
    </location>
    <ligand>
        <name>S-adenosyl-L-methionine</name>
        <dbReference type="ChEBI" id="CHEBI:59789"/>
    </ligand>
</feature>